<keyword id="KW-0378">Hydrolase</keyword>
<keyword id="KW-0408">Iron</keyword>
<keyword id="KW-0479">Metal-binding</keyword>
<keyword id="KW-0648">Protein biosynthesis</keyword>
<keyword id="KW-1185">Reference proteome</keyword>
<dbReference type="EC" id="3.5.1.88" evidence="1"/>
<dbReference type="EMBL" id="AP009256">
    <property type="protein sequence ID" value="BAF40074.1"/>
    <property type="molecule type" value="Genomic_DNA"/>
</dbReference>
<dbReference type="RefSeq" id="WP_003806691.1">
    <property type="nucleotide sequence ID" value="NZ_CAXVNC010000003.1"/>
</dbReference>
<dbReference type="SMR" id="A1A2Z1"/>
<dbReference type="STRING" id="367928.BAD_1293"/>
<dbReference type="PaxDb" id="1680-BADO_1432"/>
<dbReference type="GeneID" id="4556246"/>
<dbReference type="KEGG" id="bad:BAD_1293"/>
<dbReference type="HOGENOM" id="CLU_061901_5_2_11"/>
<dbReference type="Proteomes" id="UP000008702">
    <property type="component" value="Chromosome"/>
</dbReference>
<dbReference type="GO" id="GO:0046872">
    <property type="term" value="F:metal ion binding"/>
    <property type="evidence" value="ECO:0007669"/>
    <property type="project" value="UniProtKB-KW"/>
</dbReference>
<dbReference type="GO" id="GO:0042586">
    <property type="term" value="F:peptide deformylase activity"/>
    <property type="evidence" value="ECO:0007669"/>
    <property type="project" value="UniProtKB-UniRule"/>
</dbReference>
<dbReference type="GO" id="GO:0043686">
    <property type="term" value="P:co-translational protein modification"/>
    <property type="evidence" value="ECO:0007669"/>
    <property type="project" value="TreeGrafter"/>
</dbReference>
<dbReference type="GO" id="GO:0006412">
    <property type="term" value="P:translation"/>
    <property type="evidence" value="ECO:0007669"/>
    <property type="project" value="UniProtKB-UniRule"/>
</dbReference>
<dbReference type="CDD" id="cd00487">
    <property type="entry name" value="Pep_deformylase"/>
    <property type="match status" value="1"/>
</dbReference>
<dbReference type="FunFam" id="3.90.45.10:FF:000003">
    <property type="entry name" value="Peptide deformylase"/>
    <property type="match status" value="1"/>
</dbReference>
<dbReference type="Gene3D" id="3.90.45.10">
    <property type="entry name" value="Peptide deformylase"/>
    <property type="match status" value="1"/>
</dbReference>
<dbReference type="HAMAP" id="MF_00163">
    <property type="entry name" value="Pep_deformylase"/>
    <property type="match status" value="1"/>
</dbReference>
<dbReference type="InterPro" id="IPR023635">
    <property type="entry name" value="Peptide_deformylase"/>
</dbReference>
<dbReference type="InterPro" id="IPR036821">
    <property type="entry name" value="Peptide_deformylase_sf"/>
</dbReference>
<dbReference type="NCBIfam" id="NF001159">
    <property type="entry name" value="PRK00150.1-3"/>
    <property type="match status" value="1"/>
</dbReference>
<dbReference type="PANTHER" id="PTHR10458">
    <property type="entry name" value="PEPTIDE DEFORMYLASE"/>
    <property type="match status" value="1"/>
</dbReference>
<dbReference type="PANTHER" id="PTHR10458:SF2">
    <property type="entry name" value="PEPTIDE DEFORMYLASE, MITOCHONDRIAL"/>
    <property type="match status" value="1"/>
</dbReference>
<dbReference type="Pfam" id="PF01327">
    <property type="entry name" value="Pep_deformylase"/>
    <property type="match status" value="1"/>
</dbReference>
<dbReference type="PRINTS" id="PR01576">
    <property type="entry name" value="PDEFORMYLASE"/>
</dbReference>
<dbReference type="SUPFAM" id="SSF56420">
    <property type="entry name" value="Peptide deformylase"/>
    <property type="match status" value="1"/>
</dbReference>
<protein>
    <recommendedName>
        <fullName evidence="1">Peptide deformylase</fullName>
        <shortName evidence="1">PDF</shortName>
        <ecNumber evidence="1">3.5.1.88</ecNumber>
    </recommendedName>
    <alternativeName>
        <fullName evidence="1">Polypeptide deformylase</fullName>
    </alternativeName>
</protein>
<organism>
    <name type="scientific">Bifidobacterium adolescentis (strain ATCC 15703 / DSM 20083 / NCTC 11814 / E194a)</name>
    <dbReference type="NCBI Taxonomy" id="367928"/>
    <lineage>
        <taxon>Bacteria</taxon>
        <taxon>Bacillati</taxon>
        <taxon>Actinomycetota</taxon>
        <taxon>Actinomycetes</taxon>
        <taxon>Bifidobacteriales</taxon>
        <taxon>Bifidobacteriaceae</taxon>
        <taxon>Bifidobacterium</taxon>
    </lineage>
</organism>
<reference key="1">
    <citation type="submission" date="2006-12" db="EMBL/GenBank/DDBJ databases">
        <title>Bifidobacterium adolescentis complete genome sequence.</title>
        <authorList>
            <person name="Suzuki T."/>
            <person name="Tsuda Y."/>
            <person name="Kanou N."/>
            <person name="Inoue T."/>
            <person name="Kumazaki K."/>
            <person name="Nagano S."/>
            <person name="Hirai S."/>
            <person name="Tanaka K."/>
            <person name="Watanabe K."/>
        </authorList>
    </citation>
    <scope>NUCLEOTIDE SEQUENCE [LARGE SCALE GENOMIC DNA]</scope>
    <source>
        <strain>ATCC 15703 / DSM 20083 / NCTC 11814 / E194a</strain>
    </source>
</reference>
<comment type="function">
    <text evidence="1">Removes the formyl group from the N-terminal Met of newly synthesized proteins. Requires at least a dipeptide for an efficient rate of reaction. N-terminal L-methionine is a prerequisite for activity but the enzyme has broad specificity at other positions.</text>
</comment>
<comment type="catalytic activity">
    <reaction evidence="1">
        <text>N-terminal N-formyl-L-methionyl-[peptide] + H2O = N-terminal L-methionyl-[peptide] + formate</text>
        <dbReference type="Rhea" id="RHEA:24420"/>
        <dbReference type="Rhea" id="RHEA-COMP:10639"/>
        <dbReference type="Rhea" id="RHEA-COMP:10640"/>
        <dbReference type="ChEBI" id="CHEBI:15377"/>
        <dbReference type="ChEBI" id="CHEBI:15740"/>
        <dbReference type="ChEBI" id="CHEBI:49298"/>
        <dbReference type="ChEBI" id="CHEBI:64731"/>
        <dbReference type="EC" id="3.5.1.88"/>
    </reaction>
</comment>
<comment type="cofactor">
    <cofactor evidence="1">
        <name>Fe(2+)</name>
        <dbReference type="ChEBI" id="CHEBI:29033"/>
    </cofactor>
    <text evidence="1">Binds 1 Fe(2+) ion.</text>
</comment>
<comment type="similarity">
    <text evidence="1">Belongs to the polypeptide deformylase family.</text>
</comment>
<evidence type="ECO:0000255" key="1">
    <source>
        <dbReference type="HAMAP-Rule" id="MF_00163"/>
    </source>
</evidence>
<proteinExistence type="inferred from homology"/>
<sequence length="218" mass="24536">MFGHNSKVDLELNREVEKLIKTGGKEKIMPIVQAGEPVLRQQTIAYDGQLSRKTLDKLIDTMRTTMLEAPGVGLAATQIGLGLALAVVEDHVCEGDDGDPREAAEFPFHAIINPSYEPIGTETRSFYEGCLSFDGYQAVRKRWLDITARWQDEDGNKHEEHLHGWPARIFQHETDHLSGELYIDQAEIRSLTTNENLEDFWCEDPVPTEAAAELGFEL</sequence>
<gene>
    <name evidence="1" type="primary">def</name>
    <name type="ordered locus">BAD_1293</name>
</gene>
<accession>A1A2Z1</accession>
<feature type="chain" id="PRO_0000301010" description="Peptide deformylase">
    <location>
        <begin position="1"/>
        <end position="218"/>
    </location>
</feature>
<feature type="active site" evidence="1">
    <location>
        <position position="173"/>
    </location>
</feature>
<feature type="binding site" evidence="1">
    <location>
        <position position="130"/>
    </location>
    <ligand>
        <name>Fe cation</name>
        <dbReference type="ChEBI" id="CHEBI:24875"/>
    </ligand>
</feature>
<feature type="binding site" evidence="1">
    <location>
        <position position="172"/>
    </location>
    <ligand>
        <name>Fe cation</name>
        <dbReference type="ChEBI" id="CHEBI:24875"/>
    </ligand>
</feature>
<feature type="binding site" evidence="1">
    <location>
        <position position="176"/>
    </location>
    <ligand>
        <name>Fe cation</name>
        <dbReference type="ChEBI" id="CHEBI:24875"/>
    </ligand>
</feature>
<name>DEF_BIFAA</name>